<dbReference type="EC" id="3.6.1.7"/>
<dbReference type="EMBL" id="BC089743">
    <property type="protein sequence ID" value="AAH89743.1"/>
    <property type="molecule type" value="mRNA"/>
</dbReference>
<dbReference type="RefSeq" id="NP_001015794.1">
    <property type="nucleotide sequence ID" value="NM_001015794.1"/>
</dbReference>
<dbReference type="SMR" id="Q5EBE1"/>
<dbReference type="FunCoup" id="Q5EBE1">
    <property type="interactions" value="83"/>
</dbReference>
<dbReference type="STRING" id="8364.ENSXETP00000026091"/>
<dbReference type="PaxDb" id="8364-ENSXETP00000025270"/>
<dbReference type="DNASU" id="548511"/>
<dbReference type="GeneID" id="548511"/>
<dbReference type="KEGG" id="xtr:548511"/>
<dbReference type="AGR" id="Xenbase:XB-GENE-944874"/>
<dbReference type="CTD" id="98"/>
<dbReference type="Xenbase" id="XB-GENE-944874">
    <property type="gene designation" value="acyp2"/>
</dbReference>
<dbReference type="eggNOG" id="KOG3360">
    <property type="taxonomic scope" value="Eukaryota"/>
</dbReference>
<dbReference type="InParanoid" id="Q5EBE1"/>
<dbReference type="OMA" id="HAIMAEN"/>
<dbReference type="OrthoDB" id="7961613at2759"/>
<dbReference type="Proteomes" id="UP000008143">
    <property type="component" value="Chromosome 5"/>
</dbReference>
<dbReference type="Bgee" id="ENSXETG00000027759">
    <property type="expression patterns" value="Expressed in skeletal muscle tissue and 4 other cell types or tissues"/>
</dbReference>
<dbReference type="GO" id="GO:0003998">
    <property type="term" value="F:acylphosphatase activity"/>
    <property type="evidence" value="ECO:0007669"/>
    <property type="project" value="UniProtKB-EC"/>
</dbReference>
<dbReference type="FunFam" id="3.30.70.100:FF:000011">
    <property type="entry name" value="Acylphosphatase"/>
    <property type="match status" value="1"/>
</dbReference>
<dbReference type="Gene3D" id="3.30.70.100">
    <property type="match status" value="1"/>
</dbReference>
<dbReference type="InterPro" id="IPR020456">
    <property type="entry name" value="Acylphosphatase"/>
</dbReference>
<dbReference type="InterPro" id="IPR001792">
    <property type="entry name" value="Acylphosphatase-like_dom"/>
</dbReference>
<dbReference type="InterPro" id="IPR036046">
    <property type="entry name" value="Acylphosphatase-like_dom_sf"/>
</dbReference>
<dbReference type="InterPro" id="IPR017968">
    <property type="entry name" value="Acylphosphatase_CS"/>
</dbReference>
<dbReference type="PANTHER" id="PTHR10029">
    <property type="entry name" value="ACYLPHOSPHATASE"/>
    <property type="match status" value="1"/>
</dbReference>
<dbReference type="PANTHER" id="PTHR10029:SF20">
    <property type="entry name" value="ACYLPHOSPHATASE-2"/>
    <property type="match status" value="1"/>
</dbReference>
<dbReference type="Pfam" id="PF00708">
    <property type="entry name" value="Acylphosphatase"/>
    <property type="match status" value="1"/>
</dbReference>
<dbReference type="PRINTS" id="PR00112">
    <property type="entry name" value="ACYLPHPHTASE"/>
</dbReference>
<dbReference type="SUPFAM" id="SSF54975">
    <property type="entry name" value="Acylphosphatase/BLUF domain-like"/>
    <property type="match status" value="1"/>
</dbReference>
<dbReference type="PROSITE" id="PS00150">
    <property type="entry name" value="ACYLPHOSPHATASE_1"/>
    <property type="match status" value="1"/>
</dbReference>
<dbReference type="PROSITE" id="PS00151">
    <property type="entry name" value="ACYLPHOSPHATASE_2"/>
    <property type="match status" value="1"/>
</dbReference>
<dbReference type="PROSITE" id="PS51160">
    <property type="entry name" value="ACYLPHOSPHATASE_3"/>
    <property type="match status" value="1"/>
</dbReference>
<keyword id="KW-0378">Hydrolase</keyword>
<keyword id="KW-1185">Reference proteome</keyword>
<feature type="chain" id="PRO_0000247516" description="Acylphosphatase-2">
    <location>
        <begin position="1"/>
        <end position="103"/>
    </location>
</feature>
<feature type="domain" description="Acylphosphatase-like" evidence="1">
    <location>
        <begin position="13"/>
        <end position="103"/>
    </location>
</feature>
<feature type="active site" evidence="1">
    <location>
        <position position="28"/>
    </location>
</feature>
<feature type="active site" evidence="1">
    <location>
        <position position="46"/>
    </location>
</feature>
<protein>
    <recommendedName>
        <fullName>Acylphosphatase-2</fullName>
        <ecNumber>3.6.1.7</ecNumber>
    </recommendedName>
    <alternativeName>
        <fullName>Acylphosphate phosphohydrolase 2</fullName>
    </alternativeName>
</protein>
<sequence length="103" mass="11641">MANLAKATGKLKSVDYEVFGRVQGVCFRMYTEDEARKLGVVGWVKNTRQGTVTGQVQGPEDKVNSMKAWLSRVGSPSSRIDRIDFNDEKEITKLQYNGFSTRY</sequence>
<reference key="1">
    <citation type="submission" date="2005-02" db="EMBL/GenBank/DDBJ databases">
        <authorList>
            <consortium name="NIH - Xenopus Gene Collection (XGC) project"/>
        </authorList>
    </citation>
    <scope>NUCLEOTIDE SEQUENCE [LARGE SCALE MRNA]</scope>
</reference>
<accession>Q5EBE1</accession>
<organism>
    <name type="scientific">Xenopus tropicalis</name>
    <name type="common">Western clawed frog</name>
    <name type="synonym">Silurana tropicalis</name>
    <dbReference type="NCBI Taxonomy" id="8364"/>
    <lineage>
        <taxon>Eukaryota</taxon>
        <taxon>Metazoa</taxon>
        <taxon>Chordata</taxon>
        <taxon>Craniata</taxon>
        <taxon>Vertebrata</taxon>
        <taxon>Euteleostomi</taxon>
        <taxon>Amphibia</taxon>
        <taxon>Batrachia</taxon>
        <taxon>Anura</taxon>
        <taxon>Pipoidea</taxon>
        <taxon>Pipidae</taxon>
        <taxon>Xenopodinae</taxon>
        <taxon>Xenopus</taxon>
        <taxon>Silurana</taxon>
    </lineage>
</organism>
<evidence type="ECO:0000255" key="1">
    <source>
        <dbReference type="PROSITE-ProRule" id="PRU00520"/>
    </source>
</evidence>
<evidence type="ECO:0000305" key="2"/>
<proteinExistence type="inferred from homology"/>
<comment type="catalytic activity">
    <reaction>
        <text>an acyl phosphate + H2O = a carboxylate + phosphate + H(+)</text>
        <dbReference type="Rhea" id="RHEA:14965"/>
        <dbReference type="ChEBI" id="CHEBI:15377"/>
        <dbReference type="ChEBI" id="CHEBI:15378"/>
        <dbReference type="ChEBI" id="CHEBI:29067"/>
        <dbReference type="ChEBI" id="CHEBI:43474"/>
        <dbReference type="ChEBI" id="CHEBI:59918"/>
        <dbReference type="EC" id="3.6.1.7"/>
    </reaction>
</comment>
<comment type="similarity">
    <text evidence="2">Belongs to the acylphosphatase family.</text>
</comment>
<name>ACYP2_XENTR</name>
<gene>
    <name type="primary">acyp2</name>
</gene>